<name>NUON_METNO</name>
<gene>
    <name evidence="1" type="primary">nuoN</name>
    <name type="ordered locus">Mnod_4139</name>
</gene>
<comment type="function">
    <text evidence="1">NDH-1 shuttles electrons from NADH, via FMN and iron-sulfur (Fe-S) centers, to quinones in the respiratory chain. The immediate electron acceptor for the enzyme in this species is believed to be ubiquinone. Couples the redox reaction to proton translocation (for every two electrons transferred, four hydrogen ions are translocated across the cytoplasmic membrane), and thus conserves the redox energy in a proton gradient.</text>
</comment>
<comment type="catalytic activity">
    <reaction evidence="1">
        <text>a quinone + NADH + 5 H(+)(in) = a quinol + NAD(+) + 4 H(+)(out)</text>
        <dbReference type="Rhea" id="RHEA:57888"/>
        <dbReference type="ChEBI" id="CHEBI:15378"/>
        <dbReference type="ChEBI" id="CHEBI:24646"/>
        <dbReference type="ChEBI" id="CHEBI:57540"/>
        <dbReference type="ChEBI" id="CHEBI:57945"/>
        <dbReference type="ChEBI" id="CHEBI:132124"/>
    </reaction>
</comment>
<comment type="subunit">
    <text evidence="1">NDH-1 is composed of 14 different subunits. Subunits NuoA, H, J, K, L, M, N constitute the membrane sector of the complex.</text>
</comment>
<comment type="subcellular location">
    <subcellularLocation>
        <location evidence="1">Cell inner membrane</location>
        <topology evidence="1">Multi-pass membrane protein</topology>
    </subcellularLocation>
</comment>
<comment type="similarity">
    <text evidence="1">Belongs to the complex I subunit 2 family.</text>
</comment>
<reference key="1">
    <citation type="submission" date="2009-01" db="EMBL/GenBank/DDBJ databases">
        <title>Complete sequence of chromosome of Methylobacterium nodulans ORS 2060.</title>
        <authorList>
            <consortium name="US DOE Joint Genome Institute"/>
            <person name="Lucas S."/>
            <person name="Copeland A."/>
            <person name="Lapidus A."/>
            <person name="Glavina del Rio T."/>
            <person name="Dalin E."/>
            <person name="Tice H."/>
            <person name="Bruce D."/>
            <person name="Goodwin L."/>
            <person name="Pitluck S."/>
            <person name="Sims D."/>
            <person name="Brettin T."/>
            <person name="Detter J.C."/>
            <person name="Han C."/>
            <person name="Larimer F."/>
            <person name="Land M."/>
            <person name="Hauser L."/>
            <person name="Kyrpides N."/>
            <person name="Ivanova N."/>
            <person name="Marx C.J."/>
            <person name="Richardson P."/>
        </authorList>
    </citation>
    <scope>NUCLEOTIDE SEQUENCE [LARGE SCALE GENOMIC DNA]</scope>
    <source>
        <strain>LMG 21967 / CNCM I-2342 / ORS 2060</strain>
    </source>
</reference>
<evidence type="ECO:0000255" key="1">
    <source>
        <dbReference type="HAMAP-Rule" id="MF_00445"/>
    </source>
</evidence>
<dbReference type="EC" id="7.1.1.-" evidence="1"/>
<dbReference type="EMBL" id="CP001349">
    <property type="protein sequence ID" value="ACL59017.1"/>
    <property type="molecule type" value="Genomic_DNA"/>
</dbReference>
<dbReference type="RefSeq" id="WP_015930666.1">
    <property type="nucleotide sequence ID" value="NC_011894.1"/>
</dbReference>
<dbReference type="SMR" id="B8IUV9"/>
<dbReference type="STRING" id="460265.Mnod_4139"/>
<dbReference type="KEGG" id="mno:Mnod_4139"/>
<dbReference type="eggNOG" id="COG1007">
    <property type="taxonomic scope" value="Bacteria"/>
</dbReference>
<dbReference type="HOGENOM" id="CLU_007100_1_3_5"/>
<dbReference type="OrthoDB" id="9811718at2"/>
<dbReference type="Proteomes" id="UP000008207">
    <property type="component" value="Chromosome"/>
</dbReference>
<dbReference type="GO" id="GO:0005886">
    <property type="term" value="C:plasma membrane"/>
    <property type="evidence" value="ECO:0007669"/>
    <property type="project" value="UniProtKB-SubCell"/>
</dbReference>
<dbReference type="GO" id="GO:0008137">
    <property type="term" value="F:NADH dehydrogenase (ubiquinone) activity"/>
    <property type="evidence" value="ECO:0007669"/>
    <property type="project" value="InterPro"/>
</dbReference>
<dbReference type="GO" id="GO:0050136">
    <property type="term" value="F:NADH:ubiquinone reductase (non-electrogenic) activity"/>
    <property type="evidence" value="ECO:0007669"/>
    <property type="project" value="UniProtKB-UniRule"/>
</dbReference>
<dbReference type="GO" id="GO:0048038">
    <property type="term" value="F:quinone binding"/>
    <property type="evidence" value="ECO:0007669"/>
    <property type="project" value="UniProtKB-KW"/>
</dbReference>
<dbReference type="GO" id="GO:0042773">
    <property type="term" value="P:ATP synthesis coupled electron transport"/>
    <property type="evidence" value="ECO:0007669"/>
    <property type="project" value="InterPro"/>
</dbReference>
<dbReference type="HAMAP" id="MF_00445">
    <property type="entry name" value="NDH1_NuoN_1"/>
    <property type="match status" value="1"/>
</dbReference>
<dbReference type="InterPro" id="IPR010096">
    <property type="entry name" value="NADH-Q_OxRdtase_suN/2"/>
</dbReference>
<dbReference type="InterPro" id="IPR001750">
    <property type="entry name" value="ND/Mrp_TM"/>
</dbReference>
<dbReference type="NCBIfam" id="TIGR01770">
    <property type="entry name" value="NDH_I_N"/>
    <property type="match status" value="1"/>
</dbReference>
<dbReference type="NCBIfam" id="NF004440">
    <property type="entry name" value="PRK05777.1-3"/>
    <property type="match status" value="1"/>
</dbReference>
<dbReference type="PANTHER" id="PTHR22773">
    <property type="entry name" value="NADH DEHYDROGENASE"/>
    <property type="match status" value="1"/>
</dbReference>
<dbReference type="Pfam" id="PF00361">
    <property type="entry name" value="Proton_antipo_M"/>
    <property type="match status" value="1"/>
</dbReference>
<keyword id="KW-0997">Cell inner membrane</keyword>
<keyword id="KW-1003">Cell membrane</keyword>
<keyword id="KW-0472">Membrane</keyword>
<keyword id="KW-0520">NAD</keyword>
<keyword id="KW-0874">Quinone</keyword>
<keyword id="KW-1185">Reference proteome</keyword>
<keyword id="KW-1278">Translocase</keyword>
<keyword id="KW-0812">Transmembrane</keyword>
<keyword id="KW-1133">Transmembrane helix</keyword>
<keyword id="KW-0813">Transport</keyword>
<keyword id="KW-0830">Ubiquinone</keyword>
<proteinExistence type="inferred from homology"/>
<sequence>MNAAEIVMPALGPALPELILTVGALVLILYGALRGERSTEGVTVGAIIVLIVALFSVVSQPLGAKITTFNGSFIVDGFARVMKTLTLVGSLAALLLARDLFARERIERFEYPILIVLSSIGMLIMASANDLIGLYLGLELQSLAAYVIASFHRDDVRSTEAGLKYFVLGALSSGMLLYGASLVYGFTGSVSFPGIVTALREAHAGLGLVLGIVFVAAGVAFKLAAVPFHMWTPDVYEGAPTPVTAFFASAPKMAAMAMTVRVFIGAFPGVVAEWQQIIVFIAIASMALGSFAAIGQRNLKRLMAYSSIGNVGYALIGLAAGTEEGVRGVVVYMAIYLAMTLGAFAVILGMRRGNRMFETIEDLSGLSRTHPWLAFCLAMMMFSLAGIPPLAGFFAKFYVFAAAIKAGLNVLAVIGVVTSVVGAYYYVRIVKIMYFDDAQAAYEPLAPGLRIVLAASSVVVVLFWIVPAPLVAAAGTAARSLF</sequence>
<accession>B8IUV9</accession>
<protein>
    <recommendedName>
        <fullName evidence="1">NADH-quinone oxidoreductase subunit N</fullName>
        <ecNumber evidence="1">7.1.1.-</ecNumber>
    </recommendedName>
    <alternativeName>
        <fullName evidence="1">NADH dehydrogenase I subunit N</fullName>
    </alternativeName>
    <alternativeName>
        <fullName evidence="1">NDH-1 subunit N</fullName>
    </alternativeName>
</protein>
<organism>
    <name type="scientific">Methylobacterium nodulans (strain LMG 21967 / CNCM I-2342 / ORS 2060)</name>
    <dbReference type="NCBI Taxonomy" id="460265"/>
    <lineage>
        <taxon>Bacteria</taxon>
        <taxon>Pseudomonadati</taxon>
        <taxon>Pseudomonadota</taxon>
        <taxon>Alphaproteobacteria</taxon>
        <taxon>Hyphomicrobiales</taxon>
        <taxon>Methylobacteriaceae</taxon>
        <taxon>Methylobacterium</taxon>
    </lineage>
</organism>
<feature type="chain" id="PRO_0000391178" description="NADH-quinone oxidoreductase subunit N">
    <location>
        <begin position="1"/>
        <end position="482"/>
    </location>
</feature>
<feature type="transmembrane region" description="Helical" evidence="1">
    <location>
        <begin position="10"/>
        <end position="30"/>
    </location>
</feature>
<feature type="transmembrane region" description="Helical" evidence="1">
    <location>
        <begin position="44"/>
        <end position="64"/>
    </location>
</feature>
<feature type="transmembrane region" description="Helical" evidence="1">
    <location>
        <begin position="77"/>
        <end position="97"/>
    </location>
</feature>
<feature type="transmembrane region" description="Helical" evidence="1">
    <location>
        <begin position="113"/>
        <end position="133"/>
    </location>
</feature>
<feature type="transmembrane region" description="Helical" evidence="1">
    <location>
        <begin position="166"/>
        <end position="186"/>
    </location>
</feature>
<feature type="transmembrane region" description="Helical" evidence="1">
    <location>
        <begin position="206"/>
        <end position="226"/>
    </location>
</feature>
<feature type="transmembrane region" description="Helical" evidence="1">
    <location>
        <begin position="243"/>
        <end position="265"/>
    </location>
</feature>
<feature type="transmembrane region" description="Helical" evidence="1">
    <location>
        <begin position="277"/>
        <end position="296"/>
    </location>
</feature>
<feature type="transmembrane region" description="Helical" evidence="1">
    <location>
        <begin position="302"/>
        <end position="322"/>
    </location>
</feature>
<feature type="transmembrane region" description="Helical" evidence="1">
    <location>
        <begin position="328"/>
        <end position="348"/>
    </location>
</feature>
<feature type="transmembrane region" description="Helical" evidence="1">
    <location>
        <begin position="374"/>
        <end position="394"/>
    </location>
</feature>
<feature type="transmembrane region" description="Helical" evidence="1">
    <location>
        <begin position="397"/>
        <end position="417"/>
    </location>
</feature>
<feature type="transmembrane region" description="Helical" evidence="1">
    <location>
        <begin position="451"/>
        <end position="471"/>
    </location>
</feature>